<evidence type="ECO:0000250" key="1"/>
<evidence type="ECO:0000303" key="2">
    <source>
    </source>
</evidence>
<evidence type="ECO:0000305" key="3"/>
<keyword id="KW-0025">Alternative splicing</keyword>
<keyword id="KW-1185">Reference proteome</keyword>
<keyword id="KW-0808">Transferase</keyword>
<keyword id="KW-0833">Ubl conjugation pathway</keyword>
<comment type="function">
    <text evidence="1">Functions as an E3 ubiquitin ligase.</text>
</comment>
<comment type="catalytic activity">
    <reaction>
        <text>S-ubiquitinyl-[E2 ubiquitin-conjugating enzyme]-L-cysteine + [acceptor protein]-L-lysine = [E2 ubiquitin-conjugating enzyme]-L-cysteine + N(6)-ubiquitinyl-[acceptor protein]-L-lysine.</text>
        <dbReference type="EC" id="2.3.2.27"/>
    </reaction>
</comment>
<comment type="pathway">
    <text>Protein modification; protein ubiquitination.</text>
</comment>
<comment type="alternative products">
    <event type="alternative splicing"/>
    <isoform>
        <id>Q9SGT1-1</id>
        <name>1</name>
        <sequence type="displayed"/>
    </isoform>
    <isoform>
        <id>Q9SGT1-2</id>
        <name>2</name>
        <sequence type="described" ref="VSP_031885"/>
    </isoform>
</comment>
<comment type="miscellaneous">
    <molecule>Isoform 2</molecule>
    <text evidence="3">May be due to intron retention.</text>
</comment>
<comment type="sequence caution" evidence="3">
    <conflict type="erroneous gene model prediction">
        <sequence resource="EMBL-CDS" id="AAF02851"/>
    </conflict>
</comment>
<comment type="sequence caution" evidence="3">
    <conflict type="erroneous gene model prediction">
        <sequence resource="EMBL-CDS" id="AAF79327"/>
    </conflict>
</comment>
<protein>
    <recommendedName>
        <fullName>U-box domain-containing protein 57</fullName>
        <ecNumber>2.3.2.27</ecNumber>
    </recommendedName>
    <alternativeName>
        <fullName>Plant U-box protein 57</fullName>
    </alternativeName>
    <alternativeName>
        <fullName evidence="3">RING-type E3 ubiquitin transferase PUB57</fullName>
    </alternativeName>
</protein>
<dbReference type="EC" id="2.3.2.27"/>
<dbReference type="EMBL" id="AC002304">
    <property type="protein sequence ID" value="AAF79327.1"/>
    <property type="status" value="ALT_SEQ"/>
    <property type="molecule type" value="Genomic_DNA"/>
</dbReference>
<dbReference type="EMBL" id="AC009894">
    <property type="protein sequence ID" value="AAF02851.1"/>
    <property type="status" value="ALT_SEQ"/>
    <property type="molecule type" value="Genomic_DNA"/>
</dbReference>
<dbReference type="EMBL" id="CP002684">
    <property type="protein sequence ID" value="AEE33333.2"/>
    <property type="molecule type" value="Genomic_DNA"/>
</dbReference>
<dbReference type="EMBL" id="DQ446364">
    <property type="protein sequence ID" value="ABE65715.1"/>
    <property type="molecule type" value="mRNA"/>
</dbReference>
<dbReference type="PIR" id="E96601">
    <property type="entry name" value="E96601"/>
</dbReference>
<dbReference type="RefSeq" id="NP_001319249.1">
    <molecule id="Q9SGT1-1"/>
    <property type="nucleotide sequence ID" value="NM_001333757.1"/>
</dbReference>
<dbReference type="SMR" id="Q9SGT1"/>
<dbReference type="PaxDb" id="3702-AT1G56030.1"/>
<dbReference type="ProteomicsDB" id="224856">
    <molecule id="Q9SGT1-1"/>
</dbReference>
<dbReference type="EnsemblPlants" id="AT1G56030.1">
    <molecule id="Q9SGT1-1"/>
    <property type="protein sequence ID" value="AT1G56030.1"/>
    <property type="gene ID" value="AT1G56030"/>
</dbReference>
<dbReference type="GeneID" id="842054"/>
<dbReference type="Gramene" id="AT1G56030.1">
    <molecule id="Q9SGT1-1"/>
    <property type="protein sequence ID" value="AT1G56030.1"/>
    <property type="gene ID" value="AT1G56030"/>
</dbReference>
<dbReference type="KEGG" id="ath:AT1G56030"/>
<dbReference type="Araport" id="AT1G56030"/>
<dbReference type="TAIR" id="AT1G56030"/>
<dbReference type="eggNOG" id="ENOG502S95A">
    <property type="taxonomic scope" value="Eukaryota"/>
</dbReference>
<dbReference type="HOGENOM" id="CLU_626068_0_0_1"/>
<dbReference type="InParanoid" id="Q9SGT1"/>
<dbReference type="PhylomeDB" id="Q9SGT1"/>
<dbReference type="UniPathway" id="UPA00143"/>
<dbReference type="PRO" id="PR:Q9SGT1"/>
<dbReference type="Proteomes" id="UP000006548">
    <property type="component" value="Chromosome 1"/>
</dbReference>
<dbReference type="ExpressionAtlas" id="Q9SGT1">
    <property type="expression patterns" value="baseline and differential"/>
</dbReference>
<dbReference type="GO" id="GO:0004842">
    <property type="term" value="F:ubiquitin-protein transferase activity"/>
    <property type="evidence" value="ECO:0007669"/>
    <property type="project" value="InterPro"/>
</dbReference>
<dbReference type="GO" id="GO:0016567">
    <property type="term" value="P:protein ubiquitination"/>
    <property type="evidence" value="ECO:0007669"/>
    <property type="project" value="UniProtKB-UniPathway"/>
</dbReference>
<dbReference type="CDD" id="cd16655">
    <property type="entry name" value="RING-Ubox_WDSUB1-like"/>
    <property type="match status" value="1"/>
</dbReference>
<dbReference type="Gene3D" id="3.30.40.10">
    <property type="entry name" value="Zinc/RING finger domain, C3HC4 (zinc finger)"/>
    <property type="match status" value="1"/>
</dbReference>
<dbReference type="InterPro" id="IPR003613">
    <property type="entry name" value="Ubox_domain"/>
</dbReference>
<dbReference type="InterPro" id="IPR052085">
    <property type="entry name" value="WD-SAM-U-box"/>
</dbReference>
<dbReference type="InterPro" id="IPR013083">
    <property type="entry name" value="Znf_RING/FYVE/PHD"/>
</dbReference>
<dbReference type="PANTHER" id="PTHR46573">
    <property type="entry name" value="WD REPEAT, SAM AND U-BOX DOMAIN-CONTAINING PROTEIN 1"/>
    <property type="match status" value="1"/>
</dbReference>
<dbReference type="PANTHER" id="PTHR46573:SF1">
    <property type="entry name" value="WD REPEAT, SAM AND U-BOX DOMAIN-CONTAINING PROTEIN 1"/>
    <property type="match status" value="1"/>
</dbReference>
<dbReference type="Pfam" id="PF04564">
    <property type="entry name" value="U-box"/>
    <property type="match status" value="1"/>
</dbReference>
<dbReference type="SMART" id="SM00504">
    <property type="entry name" value="Ubox"/>
    <property type="match status" value="1"/>
</dbReference>
<dbReference type="SUPFAM" id="SSF57850">
    <property type="entry name" value="RING/U-box"/>
    <property type="match status" value="1"/>
</dbReference>
<dbReference type="PROSITE" id="PS51698">
    <property type="entry name" value="U_BOX"/>
    <property type="match status" value="1"/>
</dbReference>
<proteinExistence type="evidence at transcript level"/>
<sequence>MVKNSYVLFARLCVELPPLPSDESHGEITTVERQFLRNCQMELENLSLKTELPLVYVDESKYWRFIKTVRVLAEVFNNMKTTRTTRKSIIQVLMNPILPSERSTDAMNLFLSTIEKLADLQFSDEDFNQLFVSSRLDLQLENKYNDKVEVKLRKEAEDALARKIKEVVDLTERLLQVEALEHKHKAKLQLRTETETAVAIERDYMRWKAEIFESEFNNQLVLRRESEIALDKERKELEGIKNLLETCFTGQKNLKSQVITWKDKYDQGSSIRKEKEVALSTKKLELEIFKQLAGSYKQDADAMRQERDNALKTVQEIVDEQQPPPSFICPITQDVMKNPHMAADGFTYELEAIQKWINTGHRTSPMTNLKLSHFSFFPNRALRSAIEELGR</sequence>
<organism>
    <name type="scientific">Arabidopsis thaliana</name>
    <name type="common">Mouse-ear cress</name>
    <dbReference type="NCBI Taxonomy" id="3702"/>
    <lineage>
        <taxon>Eukaryota</taxon>
        <taxon>Viridiplantae</taxon>
        <taxon>Streptophyta</taxon>
        <taxon>Embryophyta</taxon>
        <taxon>Tracheophyta</taxon>
        <taxon>Spermatophyta</taxon>
        <taxon>Magnoliopsida</taxon>
        <taxon>eudicotyledons</taxon>
        <taxon>Gunneridae</taxon>
        <taxon>Pentapetalae</taxon>
        <taxon>rosids</taxon>
        <taxon>malvids</taxon>
        <taxon>Brassicales</taxon>
        <taxon>Brassicaceae</taxon>
        <taxon>Camelineae</taxon>
        <taxon>Arabidopsis</taxon>
    </lineage>
</organism>
<accession>Q9SGT1</accession>
<accession>F4I3I7</accession>
<accession>Q1PFJ9</accession>
<accession>Q9LG06</accession>
<feature type="chain" id="PRO_0000322192" description="U-box domain-containing protein 57">
    <location>
        <begin position="1"/>
        <end position="391"/>
    </location>
</feature>
<feature type="domain" description="MIF4G">
    <location>
        <begin position="1"/>
        <end position="178"/>
    </location>
</feature>
<feature type="domain" description="U-box">
    <location>
        <begin position="322"/>
        <end position="391"/>
    </location>
</feature>
<feature type="splice variant" id="VSP_031885" description="In isoform 2." evidence="2">
    <location>
        <begin position="1"/>
        <end position="204"/>
    </location>
</feature>
<name>PUB57_ARATH</name>
<gene>
    <name type="primary">PUB57</name>
    <name type="ordered locus">At1g56030</name>
    <name type="ORF">F14J16.34</name>
    <name type="ORF">T6H22.17</name>
</gene>
<reference key="1">
    <citation type="journal article" date="2000" name="Nature">
        <title>Sequence and analysis of chromosome 1 of the plant Arabidopsis thaliana.</title>
        <authorList>
            <person name="Theologis A."/>
            <person name="Ecker J.R."/>
            <person name="Palm C.J."/>
            <person name="Federspiel N.A."/>
            <person name="Kaul S."/>
            <person name="White O."/>
            <person name="Alonso J."/>
            <person name="Altafi H."/>
            <person name="Araujo R."/>
            <person name="Bowman C.L."/>
            <person name="Brooks S.Y."/>
            <person name="Buehler E."/>
            <person name="Chan A."/>
            <person name="Chao Q."/>
            <person name="Chen H."/>
            <person name="Cheuk R.F."/>
            <person name="Chin C.W."/>
            <person name="Chung M.K."/>
            <person name="Conn L."/>
            <person name="Conway A.B."/>
            <person name="Conway A.R."/>
            <person name="Creasy T.H."/>
            <person name="Dewar K."/>
            <person name="Dunn P."/>
            <person name="Etgu P."/>
            <person name="Feldblyum T.V."/>
            <person name="Feng J.-D."/>
            <person name="Fong B."/>
            <person name="Fujii C.Y."/>
            <person name="Gill J.E."/>
            <person name="Goldsmith A.D."/>
            <person name="Haas B."/>
            <person name="Hansen N.F."/>
            <person name="Hughes B."/>
            <person name="Huizar L."/>
            <person name="Hunter J.L."/>
            <person name="Jenkins J."/>
            <person name="Johnson-Hopson C."/>
            <person name="Khan S."/>
            <person name="Khaykin E."/>
            <person name="Kim C.J."/>
            <person name="Koo H.L."/>
            <person name="Kremenetskaia I."/>
            <person name="Kurtz D.B."/>
            <person name="Kwan A."/>
            <person name="Lam B."/>
            <person name="Langin-Hooper S."/>
            <person name="Lee A."/>
            <person name="Lee J.M."/>
            <person name="Lenz C.A."/>
            <person name="Li J.H."/>
            <person name="Li Y.-P."/>
            <person name="Lin X."/>
            <person name="Liu S.X."/>
            <person name="Liu Z.A."/>
            <person name="Luros J.S."/>
            <person name="Maiti R."/>
            <person name="Marziali A."/>
            <person name="Militscher J."/>
            <person name="Miranda M."/>
            <person name="Nguyen M."/>
            <person name="Nierman W.C."/>
            <person name="Osborne B.I."/>
            <person name="Pai G."/>
            <person name="Peterson J."/>
            <person name="Pham P.K."/>
            <person name="Rizzo M."/>
            <person name="Rooney T."/>
            <person name="Rowley D."/>
            <person name="Sakano H."/>
            <person name="Salzberg S.L."/>
            <person name="Schwartz J.R."/>
            <person name="Shinn P."/>
            <person name="Southwick A.M."/>
            <person name="Sun H."/>
            <person name="Tallon L.J."/>
            <person name="Tambunga G."/>
            <person name="Toriumi M.J."/>
            <person name="Town C.D."/>
            <person name="Utterback T."/>
            <person name="Van Aken S."/>
            <person name="Vaysberg M."/>
            <person name="Vysotskaia V.S."/>
            <person name="Walker M."/>
            <person name="Wu D."/>
            <person name="Yu G."/>
            <person name="Fraser C.M."/>
            <person name="Venter J.C."/>
            <person name="Davis R.W."/>
        </authorList>
    </citation>
    <scope>NUCLEOTIDE SEQUENCE [LARGE SCALE GENOMIC DNA]</scope>
    <source>
        <strain>cv. Columbia</strain>
    </source>
</reference>
<reference key="2">
    <citation type="journal article" date="2017" name="Plant J.">
        <title>Araport11: a complete reannotation of the Arabidopsis thaliana reference genome.</title>
        <authorList>
            <person name="Cheng C.Y."/>
            <person name="Krishnakumar V."/>
            <person name="Chan A.P."/>
            <person name="Thibaud-Nissen F."/>
            <person name="Schobel S."/>
            <person name="Town C.D."/>
        </authorList>
    </citation>
    <scope>GENOME REANNOTATION</scope>
    <source>
        <strain>cv. Columbia</strain>
    </source>
</reference>
<reference key="3">
    <citation type="journal article" date="2006" name="Plant Biotechnol. J.">
        <title>Simultaneous high-throughput recombinational cloning of open reading frames in closed and open configurations.</title>
        <authorList>
            <person name="Underwood B.A."/>
            <person name="Vanderhaeghen R."/>
            <person name="Whitford R."/>
            <person name="Town C.D."/>
            <person name="Hilson P."/>
        </authorList>
    </citation>
    <scope>NUCLEOTIDE SEQUENCE [LARGE SCALE MRNA] (ISOFORM 2)</scope>
    <source>
        <strain>cv. Columbia</strain>
    </source>
</reference>